<dbReference type="EC" id="6.3.1.2" evidence="4"/>
<dbReference type="EMBL" id="CP000480">
    <property type="protein sequence ID" value="ABK70139.1"/>
    <property type="molecule type" value="Genomic_DNA"/>
</dbReference>
<dbReference type="EMBL" id="CP001663">
    <property type="protein sequence ID" value="AFP40646.1"/>
    <property type="molecule type" value="Genomic_DNA"/>
</dbReference>
<dbReference type="RefSeq" id="WP_003895686.1">
    <property type="nucleotide sequence ID" value="NZ_SIJM01000003.1"/>
</dbReference>
<dbReference type="RefSeq" id="YP_888567.1">
    <property type="nucleotide sequence ID" value="NC_008596.1"/>
</dbReference>
<dbReference type="SMR" id="A0R079"/>
<dbReference type="STRING" id="246196.MSMEG_4290"/>
<dbReference type="PaxDb" id="246196-MSMEI_4189"/>
<dbReference type="GeneID" id="93459008"/>
<dbReference type="KEGG" id="msb:LJ00_21265"/>
<dbReference type="KEGG" id="msg:MSMEI_4189"/>
<dbReference type="KEGG" id="msm:MSMEG_4290"/>
<dbReference type="PATRIC" id="fig|246196.19.peg.4210"/>
<dbReference type="eggNOG" id="COG0174">
    <property type="taxonomic scope" value="Bacteria"/>
</dbReference>
<dbReference type="OrthoDB" id="9807095at2"/>
<dbReference type="Proteomes" id="UP000000757">
    <property type="component" value="Chromosome"/>
</dbReference>
<dbReference type="Proteomes" id="UP000006158">
    <property type="component" value="Chromosome"/>
</dbReference>
<dbReference type="GO" id="GO:0005737">
    <property type="term" value="C:cytoplasm"/>
    <property type="evidence" value="ECO:0007669"/>
    <property type="project" value="UniProtKB-SubCell"/>
</dbReference>
<dbReference type="GO" id="GO:0016020">
    <property type="term" value="C:membrane"/>
    <property type="evidence" value="ECO:0007669"/>
    <property type="project" value="TreeGrafter"/>
</dbReference>
<dbReference type="GO" id="GO:0005524">
    <property type="term" value="F:ATP binding"/>
    <property type="evidence" value="ECO:0007669"/>
    <property type="project" value="UniProtKB-KW"/>
</dbReference>
<dbReference type="GO" id="GO:0004356">
    <property type="term" value="F:glutamine synthetase activity"/>
    <property type="evidence" value="ECO:0007669"/>
    <property type="project" value="UniProtKB-EC"/>
</dbReference>
<dbReference type="GO" id="GO:0046872">
    <property type="term" value="F:metal ion binding"/>
    <property type="evidence" value="ECO:0007669"/>
    <property type="project" value="UniProtKB-KW"/>
</dbReference>
<dbReference type="GO" id="GO:0006542">
    <property type="term" value="P:glutamine biosynthetic process"/>
    <property type="evidence" value="ECO:0007669"/>
    <property type="project" value="InterPro"/>
</dbReference>
<dbReference type="GO" id="GO:0019740">
    <property type="term" value="P:nitrogen utilization"/>
    <property type="evidence" value="ECO:0007669"/>
    <property type="project" value="TreeGrafter"/>
</dbReference>
<dbReference type="FunFam" id="3.10.20.70:FF:000006">
    <property type="entry name" value="Glutamine synthetase"/>
    <property type="match status" value="1"/>
</dbReference>
<dbReference type="FunFam" id="3.30.590.10:FF:000001">
    <property type="entry name" value="Glutamine synthetase"/>
    <property type="match status" value="1"/>
</dbReference>
<dbReference type="Gene3D" id="3.10.20.70">
    <property type="entry name" value="Glutamine synthetase, N-terminal domain"/>
    <property type="match status" value="1"/>
</dbReference>
<dbReference type="Gene3D" id="3.30.590.10">
    <property type="entry name" value="Glutamine synthetase/guanido kinase, catalytic domain"/>
    <property type="match status" value="1"/>
</dbReference>
<dbReference type="InterPro" id="IPR008147">
    <property type="entry name" value="Gln_synt_N"/>
</dbReference>
<dbReference type="InterPro" id="IPR036651">
    <property type="entry name" value="Gln_synt_N_sf"/>
</dbReference>
<dbReference type="InterPro" id="IPR014746">
    <property type="entry name" value="Gln_synth/guanido_kin_cat_dom"/>
</dbReference>
<dbReference type="InterPro" id="IPR008146">
    <property type="entry name" value="Gln_synth_cat_dom"/>
</dbReference>
<dbReference type="InterPro" id="IPR027303">
    <property type="entry name" value="Gln_synth_gly_rich_site"/>
</dbReference>
<dbReference type="InterPro" id="IPR004809">
    <property type="entry name" value="Gln_synth_I"/>
</dbReference>
<dbReference type="InterPro" id="IPR001637">
    <property type="entry name" value="Gln_synth_I_adenylation_site"/>
</dbReference>
<dbReference type="InterPro" id="IPR027302">
    <property type="entry name" value="Gln_synth_N_conserv_site"/>
</dbReference>
<dbReference type="NCBIfam" id="TIGR00653">
    <property type="entry name" value="GlnA"/>
    <property type="match status" value="1"/>
</dbReference>
<dbReference type="PANTHER" id="PTHR43407">
    <property type="entry name" value="GLUTAMINE SYNTHETASE"/>
    <property type="match status" value="1"/>
</dbReference>
<dbReference type="PANTHER" id="PTHR43407:SF1">
    <property type="entry name" value="LENGSIN"/>
    <property type="match status" value="1"/>
</dbReference>
<dbReference type="Pfam" id="PF00120">
    <property type="entry name" value="Gln-synt_C"/>
    <property type="match status" value="1"/>
</dbReference>
<dbReference type="Pfam" id="PF03951">
    <property type="entry name" value="Gln-synt_N"/>
    <property type="match status" value="1"/>
</dbReference>
<dbReference type="SMART" id="SM01230">
    <property type="entry name" value="Gln-synt_C"/>
    <property type="match status" value="1"/>
</dbReference>
<dbReference type="SUPFAM" id="SSF54368">
    <property type="entry name" value="Glutamine synthetase, N-terminal domain"/>
    <property type="match status" value="1"/>
</dbReference>
<dbReference type="SUPFAM" id="SSF55931">
    <property type="entry name" value="Glutamine synthetase/guanido kinase"/>
    <property type="match status" value="1"/>
</dbReference>
<dbReference type="PROSITE" id="PS00180">
    <property type="entry name" value="GLNA_1"/>
    <property type="match status" value="1"/>
</dbReference>
<dbReference type="PROSITE" id="PS00182">
    <property type="entry name" value="GLNA_ADENYLATION"/>
    <property type="match status" value="1"/>
</dbReference>
<dbReference type="PROSITE" id="PS00181">
    <property type="entry name" value="GLNA_ATP"/>
    <property type="match status" value="1"/>
</dbReference>
<dbReference type="PROSITE" id="PS51986">
    <property type="entry name" value="GS_BETA_GRASP"/>
    <property type="match status" value="1"/>
</dbReference>
<dbReference type="PROSITE" id="PS51987">
    <property type="entry name" value="GS_CATALYTIC"/>
    <property type="match status" value="1"/>
</dbReference>
<gene>
    <name evidence="4" type="primary">glnA</name>
    <name type="synonym">glnA1</name>
    <name type="ordered locus">MSMEG_4290</name>
    <name type="ordered locus">MSMEI_4189</name>
</gene>
<proteinExistence type="evidence at protein level"/>
<organism>
    <name type="scientific">Mycolicibacterium smegmatis (strain ATCC 700084 / mc(2)155)</name>
    <name type="common">Mycobacterium smegmatis</name>
    <dbReference type="NCBI Taxonomy" id="246196"/>
    <lineage>
        <taxon>Bacteria</taxon>
        <taxon>Bacillati</taxon>
        <taxon>Actinomycetota</taxon>
        <taxon>Actinomycetes</taxon>
        <taxon>Mycobacteriales</taxon>
        <taxon>Mycobacteriaceae</taxon>
        <taxon>Mycolicibacterium</taxon>
    </lineage>
</organism>
<accession>A0R079</accession>
<accession>I7GBS4</accession>
<sequence>MAEKTSDDIFKLIKDENVEYVDIRFCDLPGVVQHFSIPASAFDESVFEDGLAFDGSSVRGFQSIHESDMMLLPDPNTARIDPFRAAKTLNMNFFVHDPFTREAYSRDPRNVARKAENYLASTGIADTAFFGAEAEFYIFDSVSFDSKINGTFYEVDSESGWWNTGEPFESDGSANRGYKVRPKGGYFPVAPYDHYVDLRDQMATNLQNAGFTLERGHHEVGTAGQAEINYKFNTLLAAADDVLLFKYIIKNTAWQAGKTVTFMPKPLFGDNGSGMHAHQSLWKDGQPLFHDESGYAGLSDIARHYIGGILHHAPSLLAFTNPTVNSYKRLVPGYEAPINLVYSQRNRSACVRIPITGNNPKAKRLEFRCPDSSGNPYLAFAAMLMAGIDGIKKKIEPLQPVDKDLYELPPDEAAAIPQAPTSLSAVIDKLEEDHEYLTEGGVFTEDLIETWISYKRENEIMPIQIRPHPYEFSLYYDV</sequence>
<feature type="chain" id="PRO_0000396819" description="Glutamine synthetase">
    <location>
        <begin position="1"/>
        <end position="478"/>
    </location>
</feature>
<feature type="domain" description="GS beta-grasp" evidence="5">
    <location>
        <begin position="16"/>
        <end position="100"/>
    </location>
</feature>
<feature type="domain" description="GS catalytic" evidence="6">
    <location>
        <begin position="108"/>
        <end position="478"/>
    </location>
</feature>
<feature type="binding site" evidence="4">
    <location>
        <position position="133"/>
    </location>
    <ligand>
        <name>Mg(2+)</name>
        <dbReference type="ChEBI" id="CHEBI:18420"/>
        <label>1</label>
    </ligand>
</feature>
<feature type="binding site" evidence="4">
    <location>
        <position position="135"/>
    </location>
    <ligand>
        <name>Mg(2+)</name>
        <dbReference type="ChEBI" id="CHEBI:18420"/>
        <label>2</label>
    </ligand>
</feature>
<feature type="binding site" evidence="4">
    <location>
        <position position="214"/>
    </location>
    <ligand>
        <name>ATP</name>
        <dbReference type="ChEBI" id="CHEBI:30616"/>
    </ligand>
</feature>
<feature type="binding site" evidence="4">
    <location>
        <position position="219"/>
    </location>
    <ligand>
        <name>Mg(2+)</name>
        <dbReference type="ChEBI" id="CHEBI:18420"/>
        <label>2</label>
    </ligand>
</feature>
<feature type="binding site" evidence="4">
    <location>
        <position position="227"/>
    </location>
    <ligand>
        <name>Mg(2+)</name>
        <dbReference type="ChEBI" id="CHEBI:18420"/>
        <label>2</label>
    </ligand>
</feature>
<feature type="binding site" evidence="4">
    <location>
        <begin position="230"/>
        <end position="232"/>
    </location>
    <ligand>
        <name>ATP</name>
        <dbReference type="ChEBI" id="CHEBI:30616"/>
    </ligand>
</feature>
<feature type="binding site" evidence="4">
    <location>
        <begin position="271"/>
        <end position="272"/>
    </location>
    <ligand>
        <name>L-glutamate</name>
        <dbReference type="ChEBI" id="CHEBI:29985"/>
    </ligand>
</feature>
<feature type="binding site" evidence="2">
    <location>
        <position position="272"/>
    </location>
    <ligand>
        <name>L-glutamate</name>
        <dbReference type="ChEBI" id="CHEBI:29985"/>
    </ligand>
</feature>
<feature type="binding site" evidence="4">
    <location>
        <position position="276"/>
    </location>
    <ligand>
        <name>Mg(2+)</name>
        <dbReference type="ChEBI" id="CHEBI:18420"/>
        <label>1</label>
    </ligand>
</feature>
<feature type="binding site" evidence="4">
    <location>
        <begin position="278"/>
        <end position="280"/>
    </location>
    <ligand>
        <name>ATP</name>
        <dbReference type="ChEBI" id="CHEBI:30616"/>
    </ligand>
</feature>
<feature type="binding site" evidence="3">
    <location>
        <position position="280"/>
    </location>
    <ligand>
        <name>ATP</name>
        <dbReference type="ChEBI" id="CHEBI:30616"/>
    </ligand>
</feature>
<feature type="binding site" evidence="4">
    <location>
        <position position="329"/>
    </location>
    <ligand>
        <name>L-glutamate</name>
        <dbReference type="ChEBI" id="CHEBI:29985"/>
    </ligand>
</feature>
<feature type="binding site" evidence="1">
    <location>
        <position position="335"/>
    </location>
    <ligand>
        <name>L-glutamate</name>
        <dbReference type="ChEBI" id="CHEBI:29985"/>
    </ligand>
</feature>
<feature type="binding site" evidence="4">
    <location>
        <position position="347"/>
    </location>
    <ligand>
        <name>ATP</name>
        <dbReference type="ChEBI" id="CHEBI:30616"/>
    </ligand>
</feature>
<feature type="binding site" evidence="4">
    <location>
        <position position="347"/>
    </location>
    <ligand>
        <name>L-glutamate</name>
        <dbReference type="ChEBI" id="CHEBI:29985"/>
    </ligand>
</feature>
<feature type="binding site" evidence="4">
    <location>
        <position position="352"/>
    </location>
    <ligand>
        <name>ATP</name>
        <dbReference type="ChEBI" id="CHEBI:30616"/>
    </ligand>
</feature>
<feature type="binding site" evidence="3">
    <location>
        <position position="361"/>
    </location>
    <ligand>
        <name>ATP</name>
        <dbReference type="ChEBI" id="CHEBI:30616"/>
    </ligand>
</feature>
<feature type="binding site" evidence="4">
    <location>
        <position position="366"/>
    </location>
    <ligand>
        <name>Mg(2+)</name>
        <dbReference type="ChEBI" id="CHEBI:18420"/>
        <label>1</label>
    </ligand>
</feature>
<feature type="binding site" evidence="4">
    <location>
        <position position="368"/>
    </location>
    <ligand>
        <name>L-glutamate</name>
        <dbReference type="ChEBI" id="CHEBI:29985"/>
    </ligand>
</feature>
<feature type="modified residue" description="O-AMP-tyrosine" evidence="4">
    <location>
        <position position="406"/>
    </location>
</feature>
<feature type="cross-link" description="Isoglutamyl lysine isopeptide (Lys-Gln) (interchain with Q-Cter in protein Pup)" evidence="7">
    <location>
        <position position="14"/>
    </location>
</feature>
<protein>
    <recommendedName>
        <fullName evidence="4">Glutamine synthetase</fullName>
        <shortName evidence="4">GS</shortName>
        <ecNumber evidence="4">6.3.1.2</ecNumber>
    </recommendedName>
    <alternativeName>
        <fullName evidence="4">Glutamate--ammonia ligase</fullName>
    </alternativeName>
    <alternativeName>
        <fullName evidence="4">Glutamine synthetase I beta</fullName>
        <shortName evidence="4">GSI beta</shortName>
    </alternativeName>
</protein>
<comment type="function">
    <text evidence="4">Involved in nitrogen metabolism via ammonium assimilation. Catalyzes the ATP-dependent biosynthesis of glutamine from glutamate and ammonia.</text>
</comment>
<comment type="catalytic activity">
    <reaction evidence="4">
        <text>L-glutamate + NH4(+) + ATP = L-glutamine + ADP + phosphate + H(+)</text>
        <dbReference type="Rhea" id="RHEA:16169"/>
        <dbReference type="ChEBI" id="CHEBI:15378"/>
        <dbReference type="ChEBI" id="CHEBI:28938"/>
        <dbReference type="ChEBI" id="CHEBI:29985"/>
        <dbReference type="ChEBI" id="CHEBI:30616"/>
        <dbReference type="ChEBI" id="CHEBI:43474"/>
        <dbReference type="ChEBI" id="CHEBI:58359"/>
        <dbReference type="ChEBI" id="CHEBI:456216"/>
        <dbReference type="EC" id="6.3.1.2"/>
    </reaction>
</comment>
<comment type="cofactor">
    <cofactor evidence="4">
        <name>Mg(2+)</name>
        <dbReference type="ChEBI" id="CHEBI:18420"/>
    </cofactor>
    <text evidence="4">Binds 2 Mg(2+) ions per subunit.</text>
</comment>
<comment type="activity regulation">
    <text evidence="4">When cellular nitrogen levels are high, the C-terminal adenylyl transferase (AT) of GlnE inhibits GlnA by covalent transfer of an adenylyl group from ATP to Tyr-406. Conversely, when nitrogen levels are low, the N-terminal adenylyl removase (AR) of GlnE activates GlnA by removing the adenylyl group by phosphorolysis. The fully adenylated enzyme complex is inactive.</text>
</comment>
<comment type="subunit">
    <text evidence="4">Oligomer of 12 subunits arranged in the form of two hexagons.</text>
</comment>
<comment type="subcellular location">
    <subcellularLocation>
        <location evidence="4">Cytoplasm</location>
    </subcellularLocation>
</comment>
<comment type="similarity">
    <text evidence="4">Belongs to the glutamine synthetase family.</text>
</comment>
<keyword id="KW-0067">ATP-binding</keyword>
<keyword id="KW-0963">Cytoplasm</keyword>
<keyword id="KW-1017">Isopeptide bond</keyword>
<keyword id="KW-0436">Ligase</keyword>
<keyword id="KW-0460">Magnesium</keyword>
<keyword id="KW-0479">Metal-binding</keyword>
<keyword id="KW-0547">Nucleotide-binding</keyword>
<keyword id="KW-0597">Phosphoprotein</keyword>
<keyword id="KW-1185">Reference proteome</keyword>
<keyword id="KW-0832">Ubl conjugation</keyword>
<name>GLN1B_MYCS2</name>
<reference key="1">
    <citation type="submission" date="2006-10" db="EMBL/GenBank/DDBJ databases">
        <authorList>
            <person name="Fleischmann R.D."/>
            <person name="Dodson R.J."/>
            <person name="Haft D.H."/>
            <person name="Merkel J.S."/>
            <person name="Nelson W.C."/>
            <person name="Fraser C.M."/>
        </authorList>
    </citation>
    <scope>NUCLEOTIDE SEQUENCE [LARGE SCALE GENOMIC DNA]</scope>
    <source>
        <strain>ATCC 700084 / mc(2)155</strain>
    </source>
</reference>
<reference key="2">
    <citation type="journal article" date="2007" name="Genome Biol.">
        <title>Interrupted coding sequences in Mycobacterium smegmatis: authentic mutations or sequencing errors?</title>
        <authorList>
            <person name="Deshayes C."/>
            <person name="Perrodou E."/>
            <person name="Gallien S."/>
            <person name="Euphrasie D."/>
            <person name="Schaeffer C."/>
            <person name="Van-Dorsselaer A."/>
            <person name="Poch O."/>
            <person name="Lecompte O."/>
            <person name="Reyrat J.-M."/>
        </authorList>
    </citation>
    <scope>NUCLEOTIDE SEQUENCE [LARGE SCALE GENOMIC DNA]</scope>
    <source>
        <strain>ATCC 700084 / mc(2)155</strain>
    </source>
</reference>
<reference key="3">
    <citation type="journal article" date="2009" name="Genome Res.">
        <title>Ortho-proteogenomics: multiple proteomes investigation through orthology and a new MS-based protocol.</title>
        <authorList>
            <person name="Gallien S."/>
            <person name="Perrodou E."/>
            <person name="Carapito C."/>
            <person name="Deshayes C."/>
            <person name="Reyrat J.-M."/>
            <person name="Van Dorsselaer A."/>
            <person name="Poch O."/>
            <person name="Schaeffer C."/>
            <person name="Lecompte O."/>
        </authorList>
    </citation>
    <scope>NUCLEOTIDE SEQUENCE [LARGE SCALE GENOMIC DNA]</scope>
    <source>
        <strain>ATCC 700084 / mc(2)155</strain>
    </source>
</reference>
<reference key="4">
    <citation type="journal article" date="2010" name="Mol. Biosyst.">
        <title>Expansion of the mycobacterial 'PUPylome'.</title>
        <authorList>
            <person name="Watrous J."/>
            <person name="Burns K."/>
            <person name="Liu W.T."/>
            <person name="Patel A."/>
            <person name="Hook V."/>
            <person name="Bafna V."/>
            <person name="Barry C.E. III"/>
            <person name="Bark S."/>
            <person name="Dorrestein P.C."/>
        </authorList>
    </citation>
    <scope>PUPYLATION AT LYS-14</scope>
    <scope>IDENTIFICATION BY MASS SPECTROMETRY</scope>
</reference>
<evidence type="ECO:0000250" key="1">
    <source>
        <dbReference type="UniProtKB" id="P0A1P6"/>
    </source>
</evidence>
<evidence type="ECO:0000250" key="2">
    <source>
        <dbReference type="UniProtKB" id="P12425"/>
    </source>
</evidence>
<evidence type="ECO:0000250" key="3">
    <source>
        <dbReference type="UniProtKB" id="P77961"/>
    </source>
</evidence>
<evidence type="ECO:0000250" key="4">
    <source>
        <dbReference type="UniProtKB" id="P9WN39"/>
    </source>
</evidence>
<evidence type="ECO:0000255" key="5">
    <source>
        <dbReference type="PROSITE-ProRule" id="PRU01330"/>
    </source>
</evidence>
<evidence type="ECO:0000255" key="6">
    <source>
        <dbReference type="PROSITE-ProRule" id="PRU01331"/>
    </source>
</evidence>
<evidence type="ECO:0000269" key="7">
    <source>
    </source>
</evidence>